<dbReference type="EC" id="3.1.3.5" evidence="1"/>
<dbReference type="EMBL" id="CP001091">
    <property type="protein sequence ID" value="ACE62668.1"/>
    <property type="molecule type" value="Genomic_DNA"/>
</dbReference>
<dbReference type="RefSeq" id="WP_005599676.1">
    <property type="nucleotide sequence ID" value="NC_010939.1"/>
</dbReference>
<dbReference type="SMR" id="B3H2Z8"/>
<dbReference type="GeneID" id="48600232"/>
<dbReference type="KEGG" id="apa:APP7_2016"/>
<dbReference type="HOGENOM" id="CLU_045192_1_2_6"/>
<dbReference type="Proteomes" id="UP000001226">
    <property type="component" value="Chromosome"/>
</dbReference>
<dbReference type="GO" id="GO:0005737">
    <property type="term" value="C:cytoplasm"/>
    <property type="evidence" value="ECO:0007669"/>
    <property type="project" value="UniProtKB-SubCell"/>
</dbReference>
<dbReference type="GO" id="GO:0008254">
    <property type="term" value="F:3'-nucleotidase activity"/>
    <property type="evidence" value="ECO:0007669"/>
    <property type="project" value="TreeGrafter"/>
</dbReference>
<dbReference type="GO" id="GO:0008253">
    <property type="term" value="F:5'-nucleotidase activity"/>
    <property type="evidence" value="ECO:0007669"/>
    <property type="project" value="UniProtKB-UniRule"/>
</dbReference>
<dbReference type="GO" id="GO:0004309">
    <property type="term" value="F:exopolyphosphatase activity"/>
    <property type="evidence" value="ECO:0007669"/>
    <property type="project" value="TreeGrafter"/>
</dbReference>
<dbReference type="GO" id="GO:0046872">
    <property type="term" value="F:metal ion binding"/>
    <property type="evidence" value="ECO:0007669"/>
    <property type="project" value="UniProtKB-UniRule"/>
</dbReference>
<dbReference type="GO" id="GO:0000166">
    <property type="term" value="F:nucleotide binding"/>
    <property type="evidence" value="ECO:0007669"/>
    <property type="project" value="UniProtKB-KW"/>
</dbReference>
<dbReference type="FunFam" id="3.40.1210.10:FF:000001">
    <property type="entry name" value="5'/3'-nucleotidase SurE"/>
    <property type="match status" value="1"/>
</dbReference>
<dbReference type="Gene3D" id="3.40.1210.10">
    <property type="entry name" value="Survival protein SurE-like phosphatase/nucleotidase"/>
    <property type="match status" value="1"/>
</dbReference>
<dbReference type="HAMAP" id="MF_00060">
    <property type="entry name" value="SurE"/>
    <property type="match status" value="1"/>
</dbReference>
<dbReference type="InterPro" id="IPR030048">
    <property type="entry name" value="SurE"/>
</dbReference>
<dbReference type="InterPro" id="IPR002828">
    <property type="entry name" value="SurE-like_Pase/nucleotidase"/>
</dbReference>
<dbReference type="InterPro" id="IPR036523">
    <property type="entry name" value="SurE-like_sf"/>
</dbReference>
<dbReference type="NCBIfam" id="NF001489">
    <property type="entry name" value="PRK00346.1-3"/>
    <property type="match status" value="1"/>
</dbReference>
<dbReference type="NCBIfam" id="NF001490">
    <property type="entry name" value="PRK00346.1-4"/>
    <property type="match status" value="1"/>
</dbReference>
<dbReference type="NCBIfam" id="TIGR00087">
    <property type="entry name" value="surE"/>
    <property type="match status" value="1"/>
</dbReference>
<dbReference type="PANTHER" id="PTHR30457">
    <property type="entry name" value="5'-NUCLEOTIDASE SURE"/>
    <property type="match status" value="1"/>
</dbReference>
<dbReference type="PANTHER" id="PTHR30457:SF12">
    <property type="entry name" value="5'_3'-NUCLEOTIDASE SURE"/>
    <property type="match status" value="1"/>
</dbReference>
<dbReference type="Pfam" id="PF01975">
    <property type="entry name" value="SurE"/>
    <property type="match status" value="1"/>
</dbReference>
<dbReference type="SUPFAM" id="SSF64167">
    <property type="entry name" value="SurE-like"/>
    <property type="match status" value="1"/>
</dbReference>
<protein>
    <recommendedName>
        <fullName evidence="1">5'-nucleotidase SurE</fullName>
        <ecNumber evidence="1">3.1.3.5</ecNumber>
    </recommendedName>
    <alternativeName>
        <fullName evidence="1">Nucleoside 5'-monophosphate phosphohydrolase</fullName>
    </alternativeName>
</protein>
<proteinExistence type="inferred from homology"/>
<organism>
    <name type="scientific">Actinobacillus pleuropneumoniae serotype 7 (strain AP76)</name>
    <dbReference type="NCBI Taxonomy" id="537457"/>
    <lineage>
        <taxon>Bacteria</taxon>
        <taxon>Pseudomonadati</taxon>
        <taxon>Pseudomonadota</taxon>
        <taxon>Gammaproteobacteria</taxon>
        <taxon>Pasteurellales</taxon>
        <taxon>Pasteurellaceae</taxon>
        <taxon>Actinobacillus</taxon>
    </lineage>
</organism>
<accession>B3H2Z8</accession>
<gene>
    <name evidence="1" type="primary">surE</name>
    <name type="ordered locus">APP7_2016</name>
</gene>
<evidence type="ECO:0000255" key="1">
    <source>
        <dbReference type="HAMAP-Rule" id="MF_00060"/>
    </source>
</evidence>
<name>SURE_ACTP7</name>
<sequence>MNILISNDDGYHAQGIQTLAETLRDAGHSVTVIAPDRNRSAASSCLTLMEPIRVHQLDEFNYAVIAGTPADCVHLALNGFFEQSFDLVISGINHGANLGDDVVYSGTVAAALEGRHLPYPSLAISLVGRKSEGHLFGNNHFDTAAKVVLDLLPKVQKGIVPARQILNINVPDLPYEQVKGVMITRLGHRSPAAEIVKREDPRGATIYWLGANGVPVDASEGTDFYALAHNYVSVTPIQADMTAHYSIQALKDTF</sequence>
<comment type="function">
    <text evidence="1">Nucleotidase that shows phosphatase activity on nucleoside 5'-monophosphates.</text>
</comment>
<comment type="catalytic activity">
    <reaction evidence="1">
        <text>a ribonucleoside 5'-phosphate + H2O = a ribonucleoside + phosphate</text>
        <dbReference type="Rhea" id="RHEA:12484"/>
        <dbReference type="ChEBI" id="CHEBI:15377"/>
        <dbReference type="ChEBI" id="CHEBI:18254"/>
        <dbReference type="ChEBI" id="CHEBI:43474"/>
        <dbReference type="ChEBI" id="CHEBI:58043"/>
        <dbReference type="EC" id="3.1.3.5"/>
    </reaction>
</comment>
<comment type="cofactor">
    <cofactor evidence="1">
        <name>a divalent metal cation</name>
        <dbReference type="ChEBI" id="CHEBI:60240"/>
    </cofactor>
    <text evidence="1">Binds 1 divalent metal cation per subunit.</text>
</comment>
<comment type="subcellular location">
    <subcellularLocation>
        <location evidence="1">Cytoplasm</location>
    </subcellularLocation>
</comment>
<comment type="similarity">
    <text evidence="1">Belongs to the SurE nucleotidase family.</text>
</comment>
<keyword id="KW-0963">Cytoplasm</keyword>
<keyword id="KW-0378">Hydrolase</keyword>
<keyword id="KW-0479">Metal-binding</keyword>
<keyword id="KW-0547">Nucleotide-binding</keyword>
<feature type="chain" id="PRO_1000091982" description="5'-nucleotidase SurE">
    <location>
        <begin position="1"/>
        <end position="254"/>
    </location>
</feature>
<feature type="binding site" evidence="1">
    <location>
        <position position="8"/>
    </location>
    <ligand>
        <name>a divalent metal cation</name>
        <dbReference type="ChEBI" id="CHEBI:60240"/>
    </ligand>
</feature>
<feature type="binding site" evidence="1">
    <location>
        <position position="9"/>
    </location>
    <ligand>
        <name>a divalent metal cation</name>
        <dbReference type="ChEBI" id="CHEBI:60240"/>
    </ligand>
</feature>
<feature type="binding site" evidence="1">
    <location>
        <position position="40"/>
    </location>
    <ligand>
        <name>a divalent metal cation</name>
        <dbReference type="ChEBI" id="CHEBI:60240"/>
    </ligand>
</feature>
<feature type="binding site" evidence="1">
    <location>
        <position position="93"/>
    </location>
    <ligand>
        <name>a divalent metal cation</name>
        <dbReference type="ChEBI" id="CHEBI:60240"/>
    </ligand>
</feature>
<reference key="1">
    <citation type="submission" date="2008-06" db="EMBL/GenBank/DDBJ databases">
        <title>Genome and proteome analysis of A. pleuropneumoniae serotype 7.</title>
        <authorList>
            <person name="Linke B."/>
            <person name="Buettner F."/>
            <person name="Martinez-Arias R."/>
            <person name="Goesmann A."/>
            <person name="Baltes N."/>
            <person name="Tegetmeyer H."/>
            <person name="Singh M."/>
            <person name="Gerlach G.F."/>
        </authorList>
    </citation>
    <scope>NUCLEOTIDE SEQUENCE [LARGE SCALE GENOMIC DNA]</scope>
    <source>
        <strain>AP76</strain>
    </source>
</reference>